<organism>
    <name type="scientific">Dictyostelium discoideum</name>
    <name type="common">Social amoeba</name>
    <dbReference type="NCBI Taxonomy" id="44689"/>
    <lineage>
        <taxon>Eukaryota</taxon>
        <taxon>Amoebozoa</taxon>
        <taxon>Evosea</taxon>
        <taxon>Eumycetozoa</taxon>
        <taxon>Dictyostelia</taxon>
        <taxon>Dictyosteliales</taxon>
        <taxon>Dictyosteliaceae</taxon>
        <taxon>Dictyostelium</taxon>
    </lineage>
</organism>
<gene>
    <name type="ORF">DDB_G0272318</name>
</gene>
<sequence length="516" mass="57557">MQRSKQETRKSQYKKSIDSDESRRKREEASLSIRKNKREESLLKKRTQAVPGSTPVKVDSLINQRLEQLPSLVAEINSENPDLILKSTTAFRKLLSIEKSPPIEEVIKTGIVPRLVKFLYMQDFPQLQFEAAWALTNIASGTPEQTRVVIENGAIQVFVLLLSSPHDDVREQAVWALGNIAGDSHYCRDLVLSHNALPPLLSLLQNPAAIKVSMVRNATWTLSNFCRGKPQPPFEIVRASLPVLAKLIYYQDEEVLIDACWALSYLSDGSNERIQEVIDAKVCRKMVELLGHPTIAVQTPALRTIGNIVTGDDNQTQIVLSVQALSHLLNLLQSPKRAIRKEACWTISNITAGDKNQIQQVIDANIIPSLVYLLANAEFEIQKEAAWAISNATSCGTPQQIHFLVSQGCVKPLCDLLKVSDPRIINVALEGIENILVAGKKEAQVTGVNPYKKIIEDADGLGKIYDLQHHMNKDTFEKVSRIISTYLEDEQEDEGDLMPEGSSFSFSNQTNSNFNL</sequence>
<keyword id="KW-0963">Cytoplasm</keyword>
<keyword id="KW-0539">Nucleus</keyword>
<keyword id="KW-0653">Protein transport</keyword>
<keyword id="KW-1185">Reference proteome</keyword>
<keyword id="KW-0677">Repeat</keyword>
<keyword id="KW-0813">Transport</keyword>
<accession>Q76P29</accession>
<accession>Q55A47</accession>
<name>IMAB_DICDI</name>
<protein>
    <recommendedName>
        <fullName>Importin subunit alpha-B</fullName>
    </recommendedName>
    <alternativeName>
        <fullName>Karyopherin subunit alpha-B</fullName>
    </alternativeName>
</protein>
<feature type="chain" id="PRO_0000327491" description="Importin subunit alpha-B">
    <location>
        <begin position="1"/>
        <end position="516"/>
    </location>
</feature>
<feature type="domain" description="IBB" evidence="2">
    <location>
        <begin position="1"/>
        <end position="55"/>
    </location>
</feature>
<feature type="repeat" description="ARM 1">
    <location>
        <begin position="55"/>
        <end position="96"/>
    </location>
</feature>
<feature type="repeat" description="ARM 2">
    <location>
        <begin position="100"/>
        <end position="140"/>
    </location>
</feature>
<feature type="repeat" description="ARM 3">
    <location>
        <begin position="143"/>
        <end position="182"/>
    </location>
</feature>
<feature type="repeat" description="ARM 4">
    <location>
        <begin position="185"/>
        <end position="227"/>
    </location>
</feature>
<feature type="repeat" description="ARM 5">
    <location>
        <begin position="229"/>
        <end position="268"/>
    </location>
</feature>
<feature type="repeat" description="ARM 6">
    <location>
        <begin position="271"/>
        <end position="310"/>
    </location>
</feature>
<feature type="repeat" description="ARM 7">
    <location>
        <begin position="313"/>
        <end position="352"/>
    </location>
</feature>
<feature type="repeat" description="ARM 8">
    <location>
        <begin position="355"/>
        <end position="394"/>
    </location>
</feature>
<feature type="repeat" description="ARM 9">
    <location>
        <begin position="398"/>
        <end position="437"/>
    </location>
</feature>
<feature type="region of interest" description="Disordered" evidence="3">
    <location>
        <begin position="1"/>
        <end position="54"/>
    </location>
</feature>
<feature type="region of interest" description="Disordered" evidence="3">
    <location>
        <begin position="490"/>
        <end position="516"/>
    </location>
</feature>
<feature type="compositionally biased region" description="Basic and acidic residues" evidence="3">
    <location>
        <begin position="1"/>
        <end position="29"/>
    </location>
</feature>
<feature type="compositionally biased region" description="Low complexity" evidence="3">
    <location>
        <begin position="502"/>
        <end position="516"/>
    </location>
</feature>
<reference key="1">
    <citation type="journal article" date="2002" name="Nature">
        <title>Sequence and analysis of chromosome 2 of Dictyostelium discoideum.</title>
        <authorList>
            <person name="Gloeckner G."/>
            <person name="Eichinger L."/>
            <person name="Szafranski K."/>
            <person name="Pachebat J.A."/>
            <person name="Bankier A.T."/>
            <person name="Dear P.H."/>
            <person name="Lehmann R."/>
            <person name="Baumgart C."/>
            <person name="Parra G."/>
            <person name="Abril J.F."/>
            <person name="Guigo R."/>
            <person name="Kumpf K."/>
            <person name="Tunggal B."/>
            <person name="Cox E.C."/>
            <person name="Quail M.A."/>
            <person name="Platzer M."/>
            <person name="Rosenthal A."/>
            <person name="Noegel A.A."/>
        </authorList>
    </citation>
    <scope>NUCLEOTIDE SEQUENCE [LARGE SCALE GENOMIC DNA]</scope>
    <source>
        <strain>AX4</strain>
    </source>
</reference>
<reference key="2">
    <citation type="journal article" date="2005" name="Nature">
        <title>The genome of the social amoeba Dictyostelium discoideum.</title>
        <authorList>
            <person name="Eichinger L."/>
            <person name="Pachebat J.A."/>
            <person name="Gloeckner G."/>
            <person name="Rajandream M.A."/>
            <person name="Sucgang R."/>
            <person name="Berriman M."/>
            <person name="Song J."/>
            <person name="Olsen R."/>
            <person name="Szafranski K."/>
            <person name="Xu Q."/>
            <person name="Tunggal B."/>
            <person name="Kummerfeld S."/>
            <person name="Madera M."/>
            <person name="Konfortov B.A."/>
            <person name="Rivero F."/>
            <person name="Bankier A.T."/>
            <person name="Lehmann R."/>
            <person name="Hamlin N."/>
            <person name="Davies R."/>
            <person name="Gaudet P."/>
            <person name="Fey P."/>
            <person name="Pilcher K."/>
            <person name="Chen G."/>
            <person name="Saunders D."/>
            <person name="Sodergren E.J."/>
            <person name="Davis P."/>
            <person name="Kerhornou A."/>
            <person name="Nie X."/>
            <person name="Hall N."/>
            <person name="Anjard C."/>
            <person name="Hemphill L."/>
            <person name="Bason N."/>
            <person name="Farbrother P."/>
            <person name="Desany B."/>
            <person name="Just E."/>
            <person name="Morio T."/>
            <person name="Rost R."/>
            <person name="Churcher C.M."/>
            <person name="Cooper J."/>
            <person name="Haydock S."/>
            <person name="van Driessche N."/>
            <person name="Cronin A."/>
            <person name="Goodhead I."/>
            <person name="Muzny D.M."/>
            <person name="Mourier T."/>
            <person name="Pain A."/>
            <person name="Lu M."/>
            <person name="Harper D."/>
            <person name="Lindsay R."/>
            <person name="Hauser H."/>
            <person name="James K.D."/>
            <person name="Quiles M."/>
            <person name="Madan Babu M."/>
            <person name="Saito T."/>
            <person name="Buchrieser C."/>
            <person name="Wardroper A."/>
            <person name="Felder M."/>
            <person name="Thangavelu M."/>
            <person name="Johnson D."/>
            <person name="Knights A."/>
            <person name="Loulseged H."/>
            <person name="Mungall K.L."/>
            <person name="Oliver K."/>
            <person name="Price C."/>
            <person name="Quail M.A."/>
            <person name="Urushihara H."/>
            <person name="Hernandez J."/>
            <person name="Rabbinowitsch E."/>
            <person name="Steffen D."/>
            <person name="Sanders M."/>
            <person name="Ma J."/>
            <person name="Kohara Y."/>
            <person name="Sharp S."/>
            <person name="Simmonds M.N."/>
            <person name="Spiegler S."/>
            <person name="Tivey A."/>
            <person name="Sugano S."/>
            <person name="White B."/>
            <person name="Walker D."/>
            <person name="Woodward J.R."/>
            <person name="Winckler T."/>
            <person name="Tanaka Y."/>
            <person name="Shaulsky G."/>
            <person name="Schleicher M."/>
            <person name="Weinstock G.M."/>
            <person name="Rosenthal A."/>
            <person name="Cox E.C."/>
            <person name="Chisholm R.L."/>
            <person name="Gibbs R.A."/>
            <person name="Loomis W.F."/>
            <person name="Platzer M."/>
            <person name="Kay R.R."/>
            <person name="Williams J.G."/>
            <person name="Dear P.H."/>
            <person name="Noegel A.A."/>
            <person name="Barrell B.G."/>
            <person name="Kuspa A."/>
        </authorList>
    </citation>
    <scope>NUCLEOTIDE SEQUENCE [LARGE SCALE GENOMIC DNA]</scope>
    <source>
        <strain>AX4</strain>
    </source>
</reference>
<dbReference type="EMBL" id="AAFI02000008">
    <property type="protein sequence ID" value="EAL71311.1"/>
    <property type="molecule type" value="Genomic_DNA"/>
</dbReference>
<dbReference type="RefSeq" id="XP_645137.1">
    <property type="nucleotide sequence ID" value="XM_640045.1"/>
</dbReference>
<dbReference type="SMR" id="Q76P29"/>
<dbReference type="FunCoup" id="Q76P29">
    <property type="interactions" value="1185"/>
</dbReference>
<dbReference type="STRING" id="44689.Q76P29"/>
<dbReference type="GlyGen" id="Q76P29">
    <property type="glycosylation" value="1 site"/>
</dbReference>
<dbReference type="PaxDb" id="44689-DDB0302555"/>
<dbReference type="EnsemblProtists" id="EAL71311">
    <property type="protein sequence ID" value="EAL71311"/>
    <property type="gene ID" value="DDB_G0272318"/>
</dbReference>
<dbReference type="GeneID" id="8618307"/>
<dbReference type="KEGG" id="ddi:DDB_G0272318"/>
<dbReference type="dictyBase" id="DDB_G0272318"/>
<dbReference type="VEuPathDB" id="AmoebaDB:DDB_G0272318"/>
<dbReference type="eggNOG" id="KOG0166">
    <property type="taxonomic scope" value="Eukaryota"/>
</dbReference>
<dbReference type="HOGENOM" id="CLU_018084_6_0_1"/>
<dbReference type="InParanoid" id="Q76P29"/>
<dbReference type="OMA" id="MVRNATW"/>
<dbReference type="PhylomeDB" id="Q76P29"/>
<dbReference type="Reactome" id="R-DDI-909733">
    <property type="pathway name" value="Interferon alpha/beta signaling"/>
</dbReference>
<dbReference type="PRO" id="PR:Q76P29"/>
<dbReference type="Proteomes" id="UP000002195">
    <property type="component" value="Chromosome 2"/>
</dbReference>
<dbReference type="GO" id="GO:0005737">
    <property type="term" value="C:cytoplasm"/>
    <property type="evidence" value="ECO:0007669"/>
    <property type="project" value="UniProtKB-SubCell"/>
</dbReference>
<dbReference type="GO" id="GO:0005635">
    <property type="term" value="C:nuclear envelope"/>
    <property type="evidence" value="ECO:0007669"/>
    <property type="project" value="UniProtKB-SubCell"/>
</dbReference>
<dbReference type="GO" id="GO:0005634">
    <property type="term" value="C:nucleus"/>
    <property type="evidence" value="ECO:0000318"/>
    <property type="project" value="GO_Central"/>
</dbReference>
<dbReference type="GO" id="GO:0061608">
    <property type="term" value="F:nuclear import signal receptor activity"/>
    <property type="evidence" value="ECO:0000318"/>
    <property type="project" value="GO_Central"/>
</dbReference>
<dbReference type="GO" id="GO:0008139">
    <property type="term" value="F:nuclear localization sequence binding"/>
    <property type="evidence" value="ECO:0000318"/>
    <property type="project" value="GO_Central"/>
</dbReference>
<dbReference type="GO" id="GO:0006607">
    <property type="term" value="P:NLS-bearing protein import into nucleus"/>
    <property type="evidence" value="ECO:0000318"/>
    <property type="project" value="GO_Central"/>
</dbReference>
<dbReference type="FunFam" id="1.20.5.690:FF:000002">
    <property type="entry name" value="Importin subunit alpha"/>
    <property type="match status" value="1"/>
</dbReference>
<dbReference type="FunFam" id="1.25.10.10:FF:000021">
    <property type="entry name" value="Importin subunit alpha"/>
    <property type="match status" value="1"/>
</dbReference>
<dbReference type="Gene3D" id="1.20.5.690">
    <property type="entry name" value="Importin-alpha, importin-beta-binding domain"/>
    <property type="match status" value="1"/>
</dbReference>
<dbReference type="Gene3D" id="1.25.10.10">
    <property type="entry name" value="Leucine-rich Repeat Variant"/>
    <property type="match status" value="1"/>
</dbReference>
<dbReference type="InterPro" id="IPR011989">
    <property type="entry name" value="ARM-like"/>
</dbReference>
<dbReference type="InterPro" id="IPR016024">
    <property type="entry name" value="ARM-type_fold"/>
</dbReference>
<dbReference type="InterPro" id="IPR032413">
    <property type="entry name" value="Arm_3"/>
</dbReference>
<dbReference type="InterPro" id="IPR000225">
    <property type="entry name" value="Armadillo"/>
</dbReference>
<dbReference type="InterPro" id="IPR002652">
    <property type="entry name" value="Importin-a_IBB"/>
</dbReference>
<dbReference type="InterPro" id="IPR036975">
    <property type="entry name" value="Importin-a_IBB_sf"/>
</dbReference>
<dbReference type="InterPro" id="IPR024931">
    <property type="entry name" value="Importin_alpha"/>
</dbReference>
<dbReference type="PANTHER" id="PTHR23316">
    <property type="entry name" value="IMPORTIN ALPHA"/>
    <property type="match status" value="1"/>
</dbReference>
<dbReference type="Pfam" id="PF00514">
    <property type="entry name" value="Arm"/>
    <property type="match status" value="8"/>
</dbReference>
<dbReference type="Pfam" id="PF16186">
    <property type="entry name" value="Arm_3"/>
    <property type="match status" value="1"/>
</dbReference>
<dbReference type="Pfam" id="PF01749">
    <property type="entry name" value="IBB"/>
    <property type="match status" value="1"/>
</dbReference>
<dbReference type="PIRSF" id="PIRSF005673">
    <property type="entry name" value="Importin_alpha"/>
    <property type="match status" value="1"/>
</dbReference>
<dbReference type="SMART" id="SM00185">
    <property type="entry name" value="ARM"/>
    <property type="match status" value="8"/>
</dbReference>
<dbReference type="SUPFAM" id="SSF48371">
    <property type="entry name" value="ARM repeat"/>
    <property type="match status" value="1"/>
</dbReference>
<dbReference type="PROSITE" id="PS50176">
    <property type="entry name" value="ARM_REPEAT"/>
    <property type="match status" value="4"/>
</dbReference>
<dbReference type="PROSITE" id="PS51214">
    <property type="entry name" value="IBB"/>
    <property type="match status" value="1"/>
</dbReference>
<evidence type="ECO:0000250" key="1"/>
<evidence type="ECO:0000255" key="2">
    <source>
        <dbReference type="PROSITE-ProRule" id="PRU00561"/>
    </source>
</evidence>
<evidence type="ECO:0000256" key="3">
    <source>
        <dbReference type="SAM" id="MobiDB-lite"/>
    </source>
</evidence>
<evidence type="ECO:0000305" key="4"/>
<proteinExistence type="inferred from homology"/>
<comment type="function">
    <text evidence="1">Functions in nuclear protein import via a substrate-importin alpha-beta transport complex that passes though the nuclear pore complexes (NPC). Binds specifically and directly to substrates containing either a simple or bipartite NLS motif (By similarity).</text>
</comment>
<comment type="subunit">
    <text evidence="1">Forms a complex with tnpo/importin subunit beta.</text>
</comment>
<comment type="subcellular location">
    <subcellularLocation>
        <location evidence="1">Cytoplasm</location>
    </subcellularLocation>
    <subcellularLocation>
        <location evidence="1">Nucleus envelope</location>
    </subcellularLocation>
</comment>
<comment type="domain">
    <text evidence="1">The N-terminal hydrophilic region contains the importin beta binding domain (IBB domain), which is sufficient for binding importin beta and essential for nuclear protein import.</text>
</comment>
<comment type="similarity">
    <text evidence="4">Belongs to the importin alpha family.</text>
</comment>